<gene>
    <name evidence="1" type="primary">rpsF</name>
    <name type="ordered locus">lpl1433</name>
</gene>
<sequence>MRHYEIMFLVHPDQSEQVPGMVERYEGIITKHNGKIHRKEDLGRRQLAYSINKVHKAHYILMNVECNLDALNEIKNAFKFNDAILRHLITVQKQAITTESVLMKKEKETKVA</sequence>
<reference key="1">
    <citation type="journal article" date="2004" name="Nat. Genet.">
        <title>Evidence in the Legionella pneumophila genome for exploitation of host cell functions and high genome plasticity.</title>
        <authorList>
            <person name="Cazalet C."/>
            <person name="Rusniok C."/>
            <person name="Brueggemann H."/>
            <person name="Zidane N."/>
            <person name="Magnier A."/>
            <person name="Ma L."/>
            <person name="Tichit M."/>
            <person name="Jarraud S."/>
            <person name="Bouchier C."/>
            <person name="Vandenesch F."/>
            <person name="Kunst F."/>
            <person name="Etienne J."/>
            <person name="Glaser P."/>
            <person name="Buchrieser C."/>
        </authorList>
    </citation>
    <scope>NUCLEOTIDE SEQUENCE [LARGE SCALE GENOMIC DNA]</scope>
    <source>
        <strain>Lens</strain>
    </source>
</reference>
<name>RS6_LEGPL</name>
<comment type="function">
    <text evidence="1">Binds together with bS18 to 16S ribosomal RNA.</text>
</comment>
<comment type="similarity">
    <text evidence="1">Belongs to the bacterial ribosomal protein bS6 family.</text>
</comment>
<evidence type="ECO:0000255" key="1">
    <source>
        <dbReference type="HAMAP-Rule" id="MF_00360"/>
    </source>
</evidence>
<evidence type="ECO:0000305" key="2"/>
<proteinExistence type="inferred from homology"/>
<organism>
    <name type="scientific">Legionella pneumophila (strain Lens)</name>
    <dbReference type="NCBI Taxonomy" id="297245"/>
    <lineage>
        <taxon>Bacteria</taxon>
        <taxon>Pseudomonadati</taxon>
        <taxon>Pseudomonadota</taxon>
        <taxon>Gammaproteobacteria</taxon>
        <taxon>Legionellales</taxon>
        <taxon>Legionellaceae</taxon>
        <taxon>Legionella</taxon>
    </lineage>
</organism>
<feature type="chain" id="PRO_0000176784" description="Small ribosomal subunit protein bS6">
    <location>
        <begin position="1"/>
        <end position="112"/>
    </location>
</feature>
<accession>Q5WWM0</accession>
<keyword id="KW-0687">Ribonucleoprotein</keyword>
<keyword id="KW-0689">Ribosomal protein</keyword>
<keyword id="KW-0694">RNA-binding</keyword>
<keyword id="KW-0699">rRNA-binding</keyword>
<protein>
    <recommendedName>
        <fullName evidence="1">Small ribosomal subunit protein bS6</fullName>
    </recommendedName>
    <alternativeName>
        <fullName evidence="2">30S ribosomal protein S6</fullName>
    </alternativeName>
</protein>
<dbReference type="EMBL" id="CR628337">
    <property type="protein sequence ID" value="CAH15673.1"/>
    <property type="molecule type" value="Genomic_DNA"/>
</dbReference>
<dbReference type="RefSeq" id="WP_010947321.1">
    <property type="nucleotide sequence ID" value="NC_006369.1"/>
</dbReference>
<dbReference type="SMR" id="Q5WWM0"/>
<dbReference type="GeneID" id="57035583"/>
<dbReference type="KEGG" id="lpf:lpl1433"/>
<dbReference type="LegioList" id="lpl1433"/>
<dbReference type="HOGENOM" id="CLU_113441_6_1_6"/>
<dbReference type="Proteomes" id="UP000002517">
    <property type="component" value="Chromosome"/>
</dbReference>
<dbReference type="GO" id="GO:0022627">
    <property type="term" value="C:cytosolic small ribosomal subunit"/>
    <property type="evidence" value="ECO:0007669"/>
    <property type="project" value="TreeGrafter"/>
</dbReference>
<dbReference type="GO" id="GO:0070181">
    <property type="term" value="F:small ribosomal subunit rRNA binding"/>
    <property type="evidence" value="ECO:0007669"/>
    <property type="project" value="TreeGrafter"/>
</dbReference>
<dbReference type="GO" id="GO:0003735">
    <property type="term" value="F:structural constituent of ribosome"/>
    <property type="evidence" value="ECO:0007669"/>
    <property type="project" value="InterPro"/>
</dbReference>
<dbReference type="GO" id="GO:0006412">
    <property type="term" value="P:translation"/>
    <property type="evidence" value="ECO:0007669"/>
    <property type="project" value="UniProtKB-UniRule"/>
</dbReference>
<dbReference type="CDD" id="cd00473">
    <property type="entry name" value="bS6"/>
    <property type="match status" value="1"/>
</dbReference>
<dbReference type="Gene3D" id="3.30.70.60">
    <property type="match status" value="1"/>
</dbReference>
<dbReference type="HAMAP" id="MF_00360">
    <property type="entry name" value="Ribosomal_bS6"/>
    <property type="match status" value="1"/>
</dbReference>
<dbReference type="InterPro" id="IPR000529">
    <property type="entry name" value="Ribosomal_bS6"/>
</dbReference>
<dbReference type="InterPro" id="IPR020815">
    <property type="entry name" value="Ribosomal_bS6_CS"/>
</dbReference>
<dbReference type="InterPro" id="IPR035980">
    <property type="entry name" value="Ribosomal_bS6_sf"/>
</dbReference>
<dbReference type="InterPro" id="IPR020814">
    <property type="entry name" value="Ribosomal_S6_plastid/chlpt"/>
</dbReference>
<dbReference type="InterPro" id="IPR014717">
    <property type="entry name" value="Transl_elong_EF1B/ribsomal_bS6"/>
</dbReference>
<dbReference type="NCBIfam" id="TIGR00166">
    <property type="entry name" value="S6"/>
    <property type="match status" value="1"/>
</dbReference>
<dbReference type="PANTHER" id="PTHR21011">
    <property type="entry name" value="MITOCHONDRIAL 28S RIBOSOMAL PROTEIN S6"/>
    <property type="match status" value="1"/>
</dbReference>
<dbReference type="PANTHER" id="PTHR21011:SF1">
    <property type="entry name" value="SMALL RIBOSOMAL SUBUNIT PROTEIN BS6M"/>
    <property type="match status" value="1"/>
</dbReference>
<dbReference type="Pfam" id="PF01250">
    <property type="entry name" value="Ribosomal_S6"/>
    <property type="match status" value="1"/>
</dbReference>
<dbReference type="SUPFAM" id="SSF54995">
    <property type="entry name" value="Ribosomal protein S6"/>
    <property type="match status" value="1"/>
</dbReference>
<dbReference type="PROSITE" id="PS01048">
    <property type="entry name" value="RIBOSOMAL_S6"/>
    <property type="match status" value="1"/>
</dbReference>